<gene>
    <name evidence="1" type="primary">CYN1</name>
    <name type="ORF">HCBG_07473</name>
</gene>
<feature type="chain" id="PRO_0000403234" description="Cyanate hydratase">
    <location>
        <begin position="1"/>
        <end position="163"/>
    </location>
</feature>
<feature type="active site" evidence="1">
    <location>
        <position position="103"/>
    </location>
</feature>
<feature type="active site" evidence="1">
    <location>
        <position position="106"/>
    </location>
</feature>
<feature type="active site" evidence="1">
    <location>
        <position position="129"/>
    </location>
</feature>
<protein>
    <recommendedName>
        <fullName evidence="1">Cyanate hydratase</fullName>
        <shortName evidence="1">Cyanase</shortName>
        <ecNumber evidence="1">4.2.1.104</ecNumber>
    </recommendedName>
    <alternativeName>
        <fullName evidence="1">Cyanate hydrolase</fullName>
    </alternativeName>
    <alternativeName>
        <fullName evidence="1">Cyanate lyase</fullName>
    </alternativeName>
</protein>
<accession>C0NWE3</accession>
<name>CYNS_AJECG</name>
<dbReference type="EC" id="4.2.1.104" evidence="1"/>
<dbReference type="EMBL" id="GG663374">
    <property type="protein sequence ID" value="EEH04248.1"/>
    <property type="molecule type" value="Genomic_DNA"/>
</dbReference>
<dbReference type="SMR" id="C0NWE3"/>
<dbReference type="STRING" id="447093.C0NWE3"/>
<dbReference type="VEuPathDB" id="FungiDB:I7I50_07944"/>
<dbReference type="HOGENOM" id="CLU_103452_0_0_1"/>
<dbReference type="InParanoid" id="C0NWE3"/>
<dbReference type="Proteomes" id="UP000001631">
    <property type="component" value="Unassembled WGS sequence"/>
</dbReference>
<dbReference type="GO" id="GO:0008824">
    <property type="term" value="F:cyanate hydratase activity"/>
    <property type="evidence" value="ECO:0007669"/>
    <property type="project" value="UniProtKB-UniRule"/>
</dbReference>
<dbReference type="GO" id="GO:0003677">
    <property type="term" value="F:DNA binding"/>
    <property type="evidence" value="ECO:0007669"/>
    <property type="project" value="InterPro"/>
</dbReference>
<dbReference type="GO" id="GO:0009439">
    <property type="term" value="P:cyanate metabolic process"/>
    <property type="evidence" value="ECO:0007669"/>
    <property type="project" value="UniProtKB-UniRule"/>
</dbReference>
<dbReference type="CDD" id="cd00559">
    <property type="entry name" value="Cyanase_C"/>
    <property type="match status" value="1"/>
</dbReference>
<dbReference type="CDD" id="cd00093">
    <property type="entry name" value="HTH_XRE"/>
    <property type="match status" value="1"/>
</dbReference>
<dbReference type="Gene3D" id="3.30.1160.10">
    <property type="entry name" value="Cyanate lyase, C-terminal domain"/>
    <property type="match status" value="1"/>
</dbReference>
<dbReference type="Gene3D" id="1.10.260.40">
    <property type="entry name" value="lambda repressor-like DNA-binding domains"/>
    <property type="match status" value="1"/>
</dbReference>
<dbReference type="HAMAP" id="MF_00535">
    <property type="entry name" value="Cyanate_hydrat"/>
    <property type="match status" value="1"/>
</dbReference>
<dbReference type="InterPro" id="IPR001387">
    <property type="entry name" value="Cro/C1-type_HTH"/>
</dbReference>
<dbReference type="InterPro" id="IPR008076">
    <property type="entry name" value="Cyanase"/>
</dbReference>
<dbReference type="InterPro" id="IPR003712">
    <property type="entry name" value="Cyanate_lyase_C"/>
</dbReference>
<dbReference type="InterPro" id="IPR036581">
    <property type="entry name" value="Cyanate_lyase_C_sf"/>
</dbReference>
<dbReference type="InterPro" id="IPR010982">
    <property type="entry name" value="Lambda_DNA-bd_dom_sf"/>
</dbReference>
<dbReference type="NCBIfam" id="TIGR00673">
    <property type="entry name" value="cynS"/>
    <property type="match status" value="1"/>
</dbReference>
<dbReference type="PANTHER" id="PTHR34186">
    <property type="entry name" value="CYANATE HYDRATASE"/>
    <property type="match status" value="1"/>
</dbReference>
<dbReference type="PANTHER" id="PTHR34186:SF2">
    <property type="entry name" value="CYANATE HYDRATASE"/>
    <property type="match status" value="1"/>
</dbReference>
<dbReference type="Pfam" id="PF02560">
    <property type="entry name" value="Cyanate_lyase"/>
    <property type="match status" value="1"/>
</dbReference>
<dbReference type="PIRSF" id="PIRSF001263">
    <property type="entry name" value="Cyanate_hydratas"/>
    <property type="match status" value="1"/>
</dbReference>
<dbReference type="PRINTS" id="PR01693">
    <property type="entry name" value="CYANASE"/>
</dbReference>
<dbReference type="SMART" id="SM01116">
    <property type="entry name" value="Cyanate_lyase"/>
    <property type="match status" value="1"/>
</dbReference>
<dbReference type="SUPFAM" id="SSF55234">
    <property type="entry name" value="Cyanase C-terminal domain"/>
    <property type="match status" value="1"/>
</dbReference>
<dbReference type="SUPFAM" id="SSF47413">
    <property type="entry name" value="lambda repressor-like DNA-binding domains"/>
    <property type="match status" value="1"/>
</dbReference>
<sequence>MSNINLTTLDISEHPNLPTSSAVLFKAKADKRLSFEKIASHIGRNEVATAAIFYGQAKASAEDIDKLAEVLGINYGQLEFLLSGFPDRGKSVPFPPKDPLIYRLYEIVQNYGYAYKAVMNEKFGDGIMSAISFSTKVEKETDKDGNDWAVVTWRGKWLPYSRF</sequence>
<proteinExistence type="inferred from homology"/>
<organism>
    <name type="scientific">Ajellomyces capsulatus (strain G186AR / H82 / ATCC MYA-2454 / RMSCC 2432)</name>
    <name type="common">Darling's disease fungus</name>
    <name type="synonym">Histoplasma capsulatum</name>
    <dbReference type="NCBI Taxonomy" id="447093"/>
    <lineage>
        <taxon>Eukaryota</taxon>
        <taxon>Fungi</taxon>
        <taxon>Dikarya</taxon>
        <taxon>Ascomycota</taxon>
        <taxon>Pezizomycotina</taxon>
        <taxon>Eurotiomycetes</taxon>
        <taxon>Eurotiomycetidae</taxon>
        <taxon>Onygenales</taxon>
        <taxon>Ajellomycetaceae</taxon>
        <taxon>Histoplasma</taxon>
    </lineage>
</organism>
<evidence type="ECO:0000255" key="1">
    <source>
        <dbReference type="HAMAP-Rule" id="MF_03139"/>
    </source>
</evidence>
<reference key="1">
    <citation type="submission" date="2009-02" db="EMBL/GenBank/DDBJ databases">
        <title>The genome sequence of Ajellomyces capsulatus strain G186AR.</title>
        <authorList>
            <person name="Champion M."/>
            <person name="Cuomo C.A."/>
            <person name="Ma L.-J."/>
            <person name="Henn M.R."/>
            <person name="Sil A."/>
            <person name="Goldman B."/>
            <person name="Young S.K."/>
            <person name="Kodira C.D."/>
            <person name="Zeng Q."/>
            <person name="Koehrsen M."/>
            <person name="Alvarado L."/>
            <person name="Berlin A."/>
            <person name="Borenstein D."/>
            <person name="Chen Z."/>
            <person name="Engels R."/>
            <person name="Freedman E."/>
            <person name="Gellesch M."/>
            <person name="Goldberg J."/>
            <person name="Griggs A."/>
            <person name="Gujja S."/>
            <person name="Heiman D."/>
            <person name="Hepburn T."/>
            <person name="Howarth C."/>
            <person name="Jen D."/>
            <person name="Larson L."/>
            <person name="Lewis B."/>
            <person name="Mehta T."/>
            <person name="Park D."/>
            <person name="Pearson M."/>
            <person name="Roberts A."/>
            <person name="Saif S."/>
            <person name="Shea T."/>
            <person name="Shenoy N."/>
            <person name="Sisk P."/>
            <person name="Stolte C."/>
            <person name="Sykes S."/>
            <person name="Walk T."/>
            <person name="White J."/>
            <person name="Yandava C."/>
            <person name="Klein B."/>
            <person name="McEwen J.G."/>
            <person name="Puccia R."/>
            <person name="Goldman G.H."/>
            <person name="Felipe M.S."/>
            <person name="Nino-Vega G."/>
            <person name="San-Blas G."/>
            <person name="Taylor J."/>
            <person name="Mendoza L."/>
            <person name="Galagan J.E."/>
            <person name="Nusbaum C."/>
            <person name="Birren B.W."/>
        </authorList>
    </citation>
    <scope>NUCLEOTIDE SEQUENCE [LARGE SCALE GENOMIC DNA]</scope>
    <source>
        <strain>G186AR / H82 / ATCC MYA-2454 / RMSCC 2432</strain>
    </source>
</reference>
<keyword id="KW-0456">Lyase</keyword>
<keyword id="KW-1185">Reference proteome</keyword>
<comment type="function">
    <text evidence="1">Catalyzes the reaction of cyanate with bicarbonate to produce ammonia and carbon dioxide.</text>
</comment>
<comment type="catalytic activity">
    <reaction evidence="1">
        <text>cyanate + hydrogencarbonate + 3 H(+) = NH4(+) + 2 CO2</text>
        <dbReference type="Rhea" id="RHEA:11120"/>
        <dbReference type="ChEBI" id="CHEBI:15378"/>
        <dbReference type="ChEBI" id="CHEBI:16526"/>
        <dbReference type="ChEBI" id="CHEBI:17544"/>
        <dbReference type="ChEBI" id="CHEBI:28938"/>
        <dbReference type="ChEBI" id="CHEBI:29195"/>
        <dbReference type="EC" id="4.2.1.104"/>
    </reaction>
</comment>
<comment type="similarity">
    <text evidence="1">Belongs to the cyanase family.</text>
</comment>